<name>BAHG_VITST</name>
<organism>
    <name type="scientific">Vitreoscilla stercoraria</name>
    <dbReference type="NCBI Taxonomy" id="61"/>
    <lineage>
        <taxon>Bacteria</taxon>
        <taxon>Pseudomonadati</taxon>
        <taxon>Pseudomonadota</taxon>
        <taxon>Betaproteobacteria</taxon>
        <taxon>Neisseriales</taxon>
        <taxon>Neisseriaceae</taxon>
        <taxon>Vitreoscilla</taxon>
    </lineage>
</organism>
<feature type="chain" id="PRO_0000052456" description="Bacterial hemoglobin">
    <location>
        <begin position="1"/>
        <end position="146"/>
    </location>
</feature>
<feature type="domain" description="Globin" evidence="1">
    <location>
        <begin position="1"/>
        <end position="138"/>
    </location>
</feature>
<feature type="binding site" description="distal binding residue" evidence="1">
    <location>
        <position position="53"/>
    </location>
    <ligand>
        <name>heme b</name>
        <dbReference type="ChEBI" id="CHEBI:60344"/>
    </ligand>
    <ligandPart>
        <name>Fe</name>
        <dbReference type="ChEBI" id="CHEBI:18248"/>
    </ligandPart>
</feature>
<feature type="binding site" description="proximal binding residue" evidence="1">
    <location>
        <position position="85"/>
    </location>
    <ligand>
        <name>heme b</name>
        <dbReference type="ChEBI" id="CHEBI:60344"/>
    </ligand>
    <ligandPart>
        <name>Fe</name>
        <dbReference type="ChEBI" id="CHEBI:18248"/>
    </ligandPart>
</feature>
<feature type="helix" evidence="2">
    <location>
        <begin position="4"/>
        <end position="19"/>
    </location>
</feature>
<feature type="helix" evidence="2">
    <location>
        <begin position="21"/>
        <end position="35"/>
    </location>
</feature>
<feature type="helix" evidence="2">
    <location>
        <begin position="37"/>
        <end position="42"/>
    </location>
</feature>
<feature type="helix" evidence="2">
    <location>
        <begin position="52"/>
        <end position="66"/>
    </location>
</feature>
<feature type="helix" evidence="2">
    <location>
        <begin position="68"/>
        <end position="70"/>
    </location>
</feature>
<feature type="helix" evidence="2">
    <location>
        <begin position="71"/>
        <end position="88"/>
    </location>
</feature>
<feature type="helix" evidence="2">
    <location>
        <begin position="92"/>
        <end position="94"/>
    </location>
</feature>
<feature type="helix" evidence="2">
    <location>
        <begin position="95"/>
        <end position="110"/>
    </location>
</feature>
<feature type="helix" evidence="2">
    <location>
        <begin position="111"/>
        <end position="113"/>
    </location>
</feature>
<feature type="helix" evidence="2">
    <location>
        <begin position="116"/>
        <end position="143"/>
    </location>
</feature>
<accession>P04252</accession>
<sequence>MLDQQTINIIKATVPVLKEHGVTITTTFYKNLFAKHPEVRPLFDMGRQESLEQPKALAMTVLAAAQNIENLPAILPAVKKIAVKHCQAGVAAAHYPIVGQELLGAIKEVLGDAATDDILDAWGKAYGVIADVFIQVEADLYAQAVE</sequence>
<reference key="1">
    <citation type="journal article" date="1988" name="Mol. Gen. Genet.">
        <title>The Vitreoscilla hemoglobin gene: molecular cloning, nucleotide sequence and genetic expression in Escherichia coli.</title>
        <authorList>
            <person name="Khosla C."/>
            <person name="Bailey J.E."/>
        </authorList>
    </citation>
    <scope>NUCLEOTIDE SEQUENCE [GENOMIC DNA]</scope>
</reference>
<reference key="2">
    <citation type="journal article" date="1986" name="Nature">
        <title>Primary sequence of a dimeric bacterial haemoglobin from Vitreoscilla.</title>
        <authorList>
            <person name="Wakabayashi S."/>
            <person name="Matsubara H."/>
            <person name="Webster D.A."/>
        </authorList>
    </citation>
    <scope>PROTEIN SEQUENCE</scope>
</reference>
<reference key="3">
    <citation type="journal article" date="1989" name="J. Mol. Biol.">
        <title>Evidence for partial export of Vitreoscilla hemoglobin into the periplasmic space in Escherichia coli. Implications for protein function.</title>
        <authorList>
            <person name="Khosla C."/>
            <person name="Bailey J.E."/>
        </authorList>
    </citation>
    <scope>NUCLEOTIDE SEQUENCE [GENOMIC DNA] OF 1-30</scope>
</reference>
<reference key="4">
    <citation type="journal article" date="1989" name="J. Bacteriol.">
        <title>Characterization of the oxygen-dependent promoter of the Vitreoscilla hemoglobin gene in Escherichia coli.</title>
        <authorList>
            <person name="Khosla C."/>
            <person name="Bailey J.E."/>
        </authorList>
    </citation>
    <scope>NUCLEOTIDE SEQUENCE [GENOMIC DNA] OF 1-20</scope>
</reference>
<reference key="5">
    <citation type="journal article" date="1997" name="Structure">
        <title>Unusual structure of the oxygen-binding site in the dimeric bacterial hemoglobin from Vitreoscilla sp.</title>
        <authorList>
            <person name="Tarricone C."/>
            <person name="Galizzi A."/>
            <person name="Coda A."/>
            <person name="Ascenzi P."/>
            <person name="Bolognesi M."/>
        </authorList>
    </citation>
    <scope>X-RAY CRYSTALLOGRAPHY (1.76 ANGSTROMS)</scope>
</reference>
<comment type="function">
    <text>This protein functions as a terminal oxidase.</text>
</comment>
<comment type="subunit">
    <text>Homodimer.</text>
</comment>
<comment type="similarity">
    <text evidence="1">Belongs to the globin family.</text>
</comment>
<protein>
    <recommendedName>
        <fullName>Bacterial hemoglobin</fullName>
    </recommendedName>
    <alternativeName>
        <fullName>Soluble cytochrome O</fullName>
    </alternativeName>
</protein>
<evidence type="ECO:0000255" key="1">
    <source>
        <dbReference type="PROSITE-ProRule" id="PRU00238"/>
    </source>
</evidence>
<evidence type="ECO:0007829" key="2">
    <source>
        <dbReference type="PDB" id="3TM9"/>
    </source>
</evidence>
<dbReference type="EMBL" id="L21670">
    <property type="protein sequence ID" value="AAA75506.1"/>
    <property type="molecule type" value="Genomic_DNA"/>
</dbReference>
<dbReference type="EMBL" id="M30794">
    <property type="protein sequence ID" value="AAA27585.1"/>
    <property type="molecule type" value="Genomic_DNA"/>
</dbReference>
<dbReference type="EMBL" id="M27061">
    <property type="protein sequence ID" value="AAA27584.1"/>
    <property type="molecule type" value="Genomic_DNA"/>
</dbReference>
<dbReference type="PIR" id="S08307">
    <property type="entry name" value="GGZLB"/>
</dbReference>
<dbReference type="RefSeq" id="WP_019959060.1">
    <property type="nucleotide sequence ID" value="NZ_CP091512.1"/>
</dbReference>
<dbReference type="PDB" id="1VHB">
    <property type="method" value="X-ray"/>
    <property type="resolution" value="1.83 A"/>
    <property type="chains" value="A/B=1-146"/>
</dbReference>
<dbReference type="PDB" id="2VHB">
    <property type="method" value="X-ray"/>
    <property type="resolution" value="1.76 A"/>
    <property type="chains" value="A/B=1-146"/>
</dbReference>
<dbReference type="PDB" id="3TLD">
    <property type="method" value="X-ray"/>
    <property type="resolution" value="1.90 A"/>
    <property type="chains" value="A/B=1-146"/>
</dbReference>
<dbReference type="PDB" id="3TM3">
    <property type="method" value="X-ray"/>
    <property type="resolution" value="1.75 A"/>
    <property type="chains" value="A=1-146"/>
</dbReference>
<dbReference type="PDB" id="3TM9">
    <property type="method" value="X-ray"/>
    <property type="resolution" value="1.72 A"/>
    <property type="chains" value="A=1-146"/>
</dbReference>
<dbReference type="PDB" id="3VHB">
    <property type="method" value="X-ray"/>
    <property type="resolution" value="2.10 A"/>
    <property type="chains" value="A/B=1-146"/>
</dbReference>
<dbReference type="PDB" id="4VHB">
    <property type="method" value="X-ray"/>
    <property type="resolution" value="1.80 A"/>
    <property type="chains" value="A/B=1-146"/>
</dbReference>
<dbReference type="PDBsum" id="1VHB"/>
<dbReference type="PDBsum" id="2VHB"/>
<dbReference type="PDBsum" id="3TLD"/>
<dbReference type="PDBsum" id="3TM3"/>
<dbReference type="PDBsum" id="3TM9"/>
<dbReference type="PDBsum" id="3VHB"/>
<dbReference type="PDBsum" id="4VHB"/>
<dbReference type="SMR" id="P04252"/>
<dbReference type="DrugBank" id="DB03366">
    <property type="generic name" value="Imidazole"/>
</dbReference>
<dbReference type="EvolutionaryTrace" id="P04252"/>
<dbReference type="GO" id="GO:0071949">
    <property type="term" value="F:FAD binding"/>
    <property type="evidence" value="ECO:0007669"/>
    <property type="project" value="TreeGrafter"/>
</dbReference>
<dbReference type="GO" id="GO:0020037">
    <property type="term" value="F:heme binding"/>
    <property type="evidence" value="ECO:0007669"/>
    <property type="project" value="InterPro"/>
</dbReference>
<dbReference type="GO" id="GO:0046872">
    <property type="term" value="F:metal ion binding"/>
    <property type="evidence" value="ECO:0007669"/>
    <property type="project" value="UniProtKB-KW"/>
</dbReference>
<dbReference type="GO" id="GO:0008941">
    <property type="term" value="F:nitric oxide dioxygenase NAD(P)H activity"/>
    <property type="evidence" value="ECO:0007669"/>
    <property type="project" value="TreeGrafter"/>
</dbReference>
<dbReference type="GO" id="GO:0019825">
    <property type="term" value="F:oxygen binding"/>
    <property type="evidence" value="ECO:0007669"/>
    <property type="project" value="InterPro"/>
</dbReference>
<dbReference type="GO" id="GO:0005344">
    <property type="term" value="F:oxygen carrier activity"/>
    <property type="evidence" value="ECO:0007669"/>
    <property type="project" value="UniProtKB-KW"/>
</dbReference>
<dbReference type="GO" id="GO:0071500">
    <property type="term" value="P:cellular response to nitrosative stress"/>
    <property type="evidence" value="ECO:0007669"/>
    <property type="project" value="TreeGrafter"/>
</dbReference>
<dbReference type="GO" id="GO:0046210">
    <property type="term" value="P:nitric oxide catabolic process"/>
    <property type="evidence" value="ECO:0007669"/>
    <property type="project" value="TreeGrafter"/>
</dbReference>
<dbReference type="CDD" id="cd14778">
    <property type="entry name" value="VtHb-like_SDgb"/>
    <property type="match status" value="1"/>
</dbReference>
<dbReference type="FunFam" id="1.10.490.10:FF:000003">
    <property type="entry name" value="Flavohemoprotein"/>
    <property type="match status" value="1"/>
</dbReference>
<dbReference type="Gene3D" id="1.10.490.10">
    <property type="entry name" value="Globins"/>
    <property type="match status" value="1"/>
</dbReference>
<dbReference type="InterPro" id="IPR000971">
    <property type="entry name" value="Globin"/>
</dbReference>
<dbReference type="InterPro" id="IPR009050">
    <property type="entry name" value="Globin-like_sf"/>
</dbReference>
<dbReference type="InterPro" id="IPR012292">
    <property type="entry name" value="Globin/Proto"/>
</dbReference>
<dbReference type="PANTHER" id="PTHR43396">
    <property type="entry name" value="FLAVOHEMOPROTEIN"/>
    <property type="match status" value="1"/>
</dbReference>
<dbReference type="PANTHER" id="PTHR43396:SF3">
    <property type="entry name" value="FLAVOHEMOPROTEIN"/>
    <property type="match status" value="1"/>
</dbReference>
<dbReference type="Pfam" id="PF00042">
    <property type="entry name" value="Globin"/>
    <property type="match status" value="1"/>
</dbReference>
<dbReference type="SUPFAM" id="SSF46458">
    <property type="entry name" value="Globin-like"/>
    <property type="match status" value="1"/>
</dbReference>
<dbReference type="PROSITE" id="PS01033">
    <property type="entry name" value="GLOBIN"/>
    <property type="match status" value="1"/>
</dbReference>
<proteinExistence type="evidence at protein level"/>
<keyword id="KW-0002">3D-structure</keyword>
<keyword id="KW-0903">Direct protein sequencing</keyword>
<keyword id="KW-0349">Heme</keyword>
<keyword id="KW-0408">Iron</keyword>
<keyword id="KW-0479">Metal-binding</keyword>
<keyword id="KW-0561">Oxygen transport</keyword>
<keyword id="KW-0813">Transport</keyword>
<gene>
    <name type="primary">vhb</name>
</gene>